<gene>
    <name evidence="1" type="primary">mntP</name>
    <name type="ordered locus">RPE_0223</name>
</gene>
<accession>Q07V52</accession>
<organism>
    <name type="scientific">Rhodopseudomonas palustris (strain BisA53)</name>
    <dbReference type="NCBI Taxonomy" id="316055"/>
    <lineage>
        <taxon>Bacteria</taxon>
        <taxon>Pseudomonadati</taxon>
        <taxon>Pseudomonadota</taxon>
        <taxon>Alphaproteobacteria</taxon>
        <taxon>Hyphomicrobiales</taxon>
        <taxon>Nitrobacteraceae</taxon>
        <taxon>Rhodopseudomonas</taxon>
    </lineage>
</organism>
<proteinExistence type="inferred from homology"/>
<feature type="chain" id="PRO_0000292542" description="Putative manganese efflux pump MntP">
    <location>
        <begin position="1"/>
        <end position="194"/>
    </location>
</feature>
<feature type="transmembrane region" description="Helical" evidence="1">
    <location>
        <begin position="2"/>
        <end position="22"/>
    </location>
</feature>
<feature type="transmembrane region" description="Helical" evidence="1">
    <location>
        <begin position="40"/>
        <end position="60"/>
    </location>
</feature>
<feature type="transmembrane region" description="Helical" evidence="1">
    <location>
        <begin position="67"/>
        <end position="87"/>
    </location>
</feature>
<feature type="transmembrane region" description="Helical" evidence="1">
    <location>
        <begin position="107"/>
        <end position="129"/>
    </location>
</feature>
<feature type="transmembrane region" description="Helical" evidence="1">
    <location>
        <begin position="133"/>
        <end position="155"/>
    </location>
</feature>
<feature type="transmembrane region" description="Helical" evidence="1">
    <location>
        <begin position="168"/>
        <end position="188"/>
    </location>
</feature>
<keyword id="KW-0997">Cell inner membrane</keyword>
<keyword id="KW-1003">Cell membrane</keyword>
<keyword id="KW-0406">Ion transport</keyword>
<keyword id="KW-0464">Manganese</keyword>
<keyword id="KW-0472">Membrane</keyword>
<keyword id="KW-0812">Transmembrane</keyword>
<keyword id="KW-1133">Transmembrane helix</keyword>
<keyword id="KW-0813">Transport</keyword>
<reference key="1">
    <citation type="submission" date="2006-09" db="EMBL/GenBank/DDBJ databases">
        <title>Complete sequence of Rhodopseudomonas palustris BisA53.</title>
        <authorList>
            <consortium name="US DOE Joint Genome Institute"/>
            <person name="Copeland A."/>
            <person name="Lucas S."/>
            <person name="Lapidus A."/>
            <person name="Barry K."/>
            <person name="Detter J.C."/>
            <person name="Glavina del Rio T."/>
            <person name="Hammon N."/>
            <person name="Israni S."/>
            <person name="Dalin E."/>
            <person name="Tice H."/>
            <person name="Pitluck S."/>
            <person name="Chain P."/>
            <person name="Malfatti S."/>
            <person name="Shin M."/>
            <person name="Vergez L."/>
            <person name="Schmutz J."/>
            <person name="Larimer F."/>
            <person name="Land M."/>
            <person name="Hauser L."/>
            <person name="Pelletier D.A."/>
            <person name="Kyrpides N."/>
            <person name="Kim E."/>
            <person name="Harwood C.S."/>
            <person name="Oda Y."/>
            <person name="Richardson P."/>
        </authorList>
    </citation>
    <scope>NUCLEOTIDE SEQUENCE [LARGE SCALE GENOMIC DNA]</scope>
    <source>
        <strain>BisA53</strain>
    </source>
</reference>
<sequence length="194" mass="19891">MTPGAIAILSLSMSTDAFAAAVSRGASHRPGVVSAVKAGFVFGVIEAITPLIGWSLGLVAADLVKEVDHWIAFGLLTIVGGKMIWEATRSQDHHEEGAAPKRSNRWALIATAVGTSIDAAAVGVGLAFIGANIWVIAASIGFTTFVCTTVGMLIGKTVGQRFGKMAELIGGLALVGLGAMILIQHTGVLKTQLG</sequence>
<evidence type="ECO:0000255" key="1">
    <source>
        <dbReference type="HAMAP-Rule" id="MF_01521"/>
    </source>
</evidence>
<evidence type="ECO:0000305" key="2"/>
<dbReference type="EMBL" id="CP000463">
    <property type="protein sequence ID" value="ABJ04182.1"/>
    <property type="status" value="ALT_INIT"/>
    <property type="molecule type" value="Genomic_DNA"/>
</dbReference>
<dbReference type="KEGG" id="rpe:RPE_0223"/>
<dbReference type="eggNOG" id="COG1971">
    <property type="taxonomic scope" value="Bacteria"/>
</dbReference>
<dbReference type="HOGENOM" id="CLU_096410_0_0_5"/>
<dbReference type="OrthoDB" id="9811590at2"/>
<dbReference type="GO" id="GO:0005886">
    <property type="term" value="C:plasma membrane"/>
    <property type="evidence" value="ECO:0007669"/>
    <property type="project" value="UniProtKB-SubCell"/>
</dbReference>
<dbReference type="GO" id="GO:0005384">
    <property type="term" value="F:manganese ion transmembrane transporter activity"/>
    <property type="evidence" value="ECO:0007669"/>
    <property type="project" value="UniProtKB-UniRule"/>
</dbReference>
<dbReference type="HAMAP" id="MF_01521">
    <property type="entry name" value="MntP_pump"/>
    <property type="match status" value="1"/>
</dbReference>
<dbReference type="InterPro" id="IPR003810">
    <property type="entry name" value="Mntp/YtaF"/>
</dbReference>
<dbReference type="InterPro" id="IPR022929">
    <property type="entry name" value="Put_MntP"/>
</dbReference>
<dbReference type="PANTHER" id="PTHR35529">
    <property type="entry name" value="MANGANESE EFFLUX PUMP MNTP-RELATED"/>
    <property type="match status" value="1"/>
</dbReference>
<dbReference type="PANTHER" id="PTHR35529:SF1">
    <property type="entry name" value="MANGANESE EFFLUX PUMP MNTP-RELATED"/>
    <property type="match status" value="1"/>
</dbReference>
<dbReference type="Pfam" id="PF02659">
    <property type="entry name" value="Mntp"/>
    <property type="match status" value="1"/>
</dbReference>
<comment type="function">
    <text evidence="1">Probably functions as a manganese efflux pump.</text>
</comment>
<comment type="subcellular location">
    <subcellularLocation>
        <location evidence="1">Cell inner membrane</location>
        <topology evidence="1">Multi-pass membrane protein</topology>
    </subcellularLocation>
</comment>
<comment type="similarity">
    <text evidence="1">Belongs to the MntP (TC 9.B.29) family.</text>
</comment>
<comment type="sequence caution" evidence="2">
    <conflict type="erroneous initiation">
        <sequence resource="EMBL-CDS" id="ABJ04182"/>
    </conflict>
</comment>
<name>MNTP_RHOP5</name>
<protein>
    <recommendedName>
        <fullName evidence="1">Putative manganese efflux pump MntP</fullName>
    </recommendedName>
</protein>